<accession>Q73F83</accession>
<protein>
    <recommendedName>
        <fullName evidence="1">Small ribosomal subunit protein uS14</fullName>
    </recommendedName>
    <alternativeName>
        <fullName evidence="2">30S ribosomal protein S14 type Z</fullName>
    </alternativeName>
</protein>
<dbReference type="EMBL" id="AE017194">
    <property type="protein sequence ID" value="AAS39059.1"/>
    <property type="molecule type" value="Genomic_DNA"/>
</dbReference>
<dbReference type="SMR" id="Q73F83"/>
<dbReference type="KEGG" id="bca:BCE_0123"/>
<dbReference type="HOGENOM" id="CLU_139869_3_0_9"/>
<dbReference type="Proteomes" id="UP000002527">
    <property type="component" value="Chromosome"/>
</dbReference>
<dbReference type="GO" id="GO:0015935">
    <property type="term" value="C:small ribosomal subunit"/>
    <property type="evidence" value="ECO:0007669"/>
    <property type="project" value="TreeGrafter"/>
</dbReference>
<dbReference type="GO" id="GO:0019843">
    <property type="term" value="F:rRNA binding"/>
    <property type="evidence" value="ECO:0007669"/>
    <property type="project" value="UniProtKB-UniRule"/>
</dbReference>
<dbReference type="GO" id="GO:0003735">
    <property type="term" value="F:structural constituent of ribosome"/>
    <property type="evidence" value="ECO:0007669"/>
    <property type="project" value="InterPro"/>
</dbReference>
<dbReference type="GO" id="GO:0008270">
    <property type="term" value="F:zinc ion binding"/>
    <property type="evidence" value="ECO:0007669"/>
    <property type="project" value="UniProtKB-UniRule"/>
</dbReference>
<dbReference type="GO" id="GO:0006412">
    <property type="term" value="P:translation"/>
    <property type="evidence" value="ECO:0007669"/>
    <property type="project" value="UniProtKB-UniRule"/>
</dbReference>
<dbReference type="FunFam" id="4.10.830.10:FF:000001">
    <property type="entry name" value="30S ribosomal protein S14 type Z"/>
    <property type="match status" value="1"/>
</dbReference>
<dbReference type="Gene3D" id="4.10.830.10">
    <property type="entry name" value="30s Ribosomal Protein S14, Chain N"/>
    <property type="match status" value="1"/>
</dbReference>
<dbReference type="HAMAP" id="MF_01364_B">
    <property type="entry name" value="Ribosomal_uS14_2_B"/>
    <property type="match status" value="1"/>
</dbReference>
<dbReference type="InterPro" id="IPR001209">
    <property type="entry name" value="Ribosomal_uS14"/>
</dbReference>
<dbReference type="InterPro" id="IPR023053">
    <property type="entry name" value="Ribosomal_uS14_bact"/>
</dbReference>
<dbReference type="InterPro" id="IPR018271">
    <property type="entry name" value="Ribosomal_uS14_CS"/>
</dbReference>
<dbReference type="InterPro" id="IPR043140">
    <property type="entry name" value="Ribosomal_uS14_sf"/>
</dbReference>
<dbReference type="NCBIfam" id="NF005974">
    <property type="entry name" value="PRK08061.1"/>
    <property type="match status" value="1"/>
</dbReference>
<dbReference type="PANTHER" id="PTHR19836">
    <property type="entry name" value="30S RIBOSOMAL PROTEIN S14"/>
    <property type="match status" value="1"/>
</dbReference>
<dbReference type="PANTHER" id="PTHR19836:SF26">
    <property type="entry name" value="SMALL RIBOSOMAL SUBUNIT PROTEIN US14B"/>
    <property type="match status" value="1"/>
</dbReference>
<dbReference type="Pfam" id="PF00253">
    <property type="entry name" value="Ribosomal_S14"/>
    <property type="match status" value="1"/>
</dbReference>
<dbReference type="SUPFAM" id="SSF57716">
    <property type="entry name" value="Glucocorticoid receptor-like (DNA-binding domain)"/>
    <property type="match status" value="1"/>
</dbReference>
<dbReference type="PROSITE" id="PS00527">
    <property type="entry name" value="RIBOSOMAL_S14"/>
    <property type="match status" value="1"/>
</dbReference>
<comment type="function">
    <text evidence="1">Binds 16S rRNA, required for the assembly of 30S particles and may also be responsible for determining the conformation of the 16S rRNA at the A site.</text>
</comment>
<comment type="cofactor">
    <cofactor evidence="1">
        <name>Zn(2+)</name>
        <dbReference type="ChEBI" id="CHEBI:29105"/>
    </cofactor>
    <text evidence="1">Binds 1 zinc ion per subunit.</text>
</comment>
<comment type="subunit">
    <text evidence="1">Part of the 30S ribosomal subunit. Contacts proteins S3 and S10.</text>
</comment>
<comment type="similarity">
    <text evidence="1">Belongs to the universal ribosomal protein uS14 family. Zinc-binding uS14 subfamily.</text>
</comment>
<feature type="chain" id="PRO_0000269078" description="Small ribosomal subunit protein uS14">
    <location>
        <begin position="1"/>
        <end position="61"/>
    </location>
</feature>
<feature type="binding site" evidence="1">
    <location>
        <position position="24"/>
    </location>
    <ligand>
        <name>Zn(2+)</name>
        <dbReference type="ChEBI" id="CHEBI:29105"/>
    </ligand>
</feature>
<feature type="binding site" evidence="1">
    <location>
        <position position="27"/>
    </location>
    <ligand>
        <name>Zn(2+)</name>
        <dbReference type="ChEBI" id="CHEBI:29105"/>
    </ligand>
</feature>
<feature type="binding site" evidence="1">
    <location>
        <position position="40"/>
    </location>
    <ligand>
        <name>Zn(2+)</name>
        <dbReference type="ChEBI" id="CHEBI:29105"/>
    </ligand>
</feature>
<feature type="binding site" evidence="1">
    <location>
        <position position="43"/>
    </location>
    <ligand>
        <name>Zn(2+)</name>
        <dbReference type="ChEBI" id="CHEBI:29105"/>
    </ligand>
</feature>
<sequence length="61" mass="7296">MAKKSMIAKQKRTPKFKVQEYTRCERCGRPHSVYRKFKLCRICFRELAYKGQIPGVKKASW</sequence>
<name>RS14Z_BACC1</name>
<keyword id="KW-0479">Metal-binding</keyword>
<keyword id="KW-0687">Ribonucleoprotein</keyword>
<keyword id="KW-0689">Ribosomal protein</keyword>
<keyword id="KW-0694">RNA-binding</keyword>
<keyword id="KW-0699">rRNA-binding</keyword>
<keyword id="KW-0862">Zinc</keyword>
<reference key="1">
    <citation type="journal article" date="2004" name="Nucleic Acids Res.">
        <title>The genome sequence of Bacillus cereus ATCC 10987 reveals metabolic adaptations and a large plasmid related to Bacillus anthracis pXO1.</title>
        <authorList>
            <person name="Rasko D.A."/>
            <person name="Ravel J."/>
            <person name="Oekstad O.A."/>
            <person name="Helgason E."/>
            <person name="Cer R.Z."/>
            <person name="Jiang L."/>
            <person name="Shores K.A."/>
            <person name="Fouts D.E."/>
            <person name="Tourasse N.J."/>
            <person name="Angiuoli S.V."/>
            <person name="Kolonay J.F."/>
            <person name="Nelson W.C."/>
            <person name="Kolstoe A.-B."/>
            <person name="Fraser C.M."/>
            <person name="Read T.D."/>
        </authorList>
    </citation>
    <scope>NUCLEOTIDE SEQUENCE [LARGE SCALE GENOMIC DNA]</scope>
    <source>
        <strain>ATCC 10987 / NRS 248</strain>
    </source>
</reference>
<proteinExistence type="inferred from homology"/>
<gene>
    <name evidence="1" type="primary">rpsZ</name>
    <name evidence="1" type="synonym">rpsN</name>
    <name type="ordered locus">BCE_0123</name>
</gene>
<organism>
    <name type="scientific">Bacillus cereus (strain ATCC 10987 / NRS 248)</name>
    <dbReference type="NCBI Taxonomy" id="222523"/>
    <lineage>
        <taxon>Bacteria</taxon>
        <taxon>Bacillati</taxon>
        <taxon>Bacillota</taxon>
        <taxon>Bacilli</taxon>
        <taxon>Bacillales</taxon>
        <taxon>Bacillaceae</taxon>
        <taxon>Bacillus</taxon>
        <taxon>Bacillus cereus group</taxon>
    </lineage>
</organism>
<evidence type="ECO:0000255" key="1">
    <source>
        <dbReference type="HAMAP-Rule" id="MF_01364"/>
    </source>
</evidence>
<evidence type="ECO:0000305" key="2"/>